<feature type="chain" id="PRO_1000059269" description="Large ribosomal subunit protein bL33">
    <location>
        <begin position="1"/>
        <end position="62"/>
    </location>
</feature>
<name>RL33_BACFR</name>
<protein>
    <recommendedName>
        <fullName evidence="1">Large ribosomal subunit protein bL33</fullName>
    </recommendedName>
    <alternativeName>
        <fullName evidence="2">50S ribosomal protein L33</fullName>
    </alternativeName>
</protein>
<comment type="similarity">
    <text evidence="1">Belongs to the bacterial ribosomal protein bL33 family.</text>
</comment>
<proteinExistence type="inferred from homology"/>
<evidence type="ECO:0000255" key="1">
    <source>
        <dbReference type="HAMAP-Rule" id="MF_00294"/>
    </source>
</evidence>
<evidence type="ECO:0000305" key="2"/>
<keyword id="KW-0687">Ribonucleoprotein</keyword>
<keyword id="KW-0689">Ribosomal protein</keyword>
<organism>
    <name type="scientific">Bacteroides fragilis (strain YCH46)</name>
    <dbReference type="NCBI Taxonomy" id="295405"/>
    <lineage>
        <taxon>Bacteria</taxon>
        <taxon>Pseudomonadati</taxon>
        <taxon>Bacteroidota</taxon>
        <taxon>Bacteroidia</taxon>
        <taxon>Bacteroidales</taxon>
        <taxon>Bacteroidaceae</taxon>
        <taxon>Bacteroides</taxon>
    </lineage>
</organism>
<sequence>MAKKAKGNRVQVILECTEHKDSGMPGTSRYITTKNRKNTTERLELKKYNPILKRVTVHKEIK</sequence>
<gene>
    <name evidence="1" type="primary">rpmG</name>
    <name type="ordered locus">BF2427.1</name>
</gene>
<dbReference type="EMBL" id="AP006841">
    <property type="protein sequence ID" value="BAD49177.1"/>
    <property type="molecule type" value="Genomic_DNA"/>
</dbReference>
<dbReference type="RefSeq" id="WP_002560155.1">
    <property type="nucleotide sequence ID" value="NZ_UYXF01000005.1"/>
</dbReference>
<dbReference type="RefSeq" id="YP_099711.1">
    <property type="nucleotide sequence ID" value="NC_006347.1"/>
</dbReference>
<dbReference type="SMR" id="Q64TK2"/>
<dbReference type="STRING" id="295405.BF2427.1"/>
<dbReference type="GeneID" id="93117417"/>
<dbReference type="KEGG" id="bfr:BF2427.1"/>
<dbReference type="PATRIC" id="fig|295405.11.peg.2346"/>
<dbReference type="HOGENOM" id="CLU_190949_3_0_10"/>
<dbReference type="OrthoDB" id="9801333at2"/>
<dbReference type="PRO" id="PR:Q64TK2"/>
<dbReference type="Proteomes" id="UP000002197">
    <property type="component" value="Chromosome"/>
</dbReference>
<dbReference type="GO" id="GO:0005737">
    <property type="term" value="C:cytoplasm"/>
    <property type="evidence" value="ECO:0007669"/>
    <property type="project" value="UniProtKB-ARBA"/>
</dbReference>
<dbReference type="GO" id="GO:1990904">
    <property type="term" value="C:ribonucleoprotein complex"/>
    <property type="evidence" value="ECO:0007669"/>
    <property type="project" value="UniProtKB-KW"/>
</dbReference>
<dbReference type="GO" id="GO:0005840">
    <property type="term" value="C:ribosome"/>
    <property type="evidence" value="ECO:0007669"/>
    <property type="project" value="UniProtKB-KW"/>
</dbReference>
<dbReference type="GO" id="GO:0003735">
    <property type="term" value="F:structural constituent of ribosome"/>
    <property type="evidence" value="ECO:0007669"/>
    <property type="project" value="InterPro"/>
</dbReference>
<dbReference type="GO" id="GO:0006412">
    <property type="term" value="P:translation"/>
    <property type="evidence" value="ECO:0007669"/>
    <property type="project" value="UniProtKB-UniRule"/>
</dbReference>
<dbReference type="Gene3D" id="2.20.28.120">
    <property type="entry name" value="Ribosomal protein L33"/>
    <property type="match status" value="1"/>
</dbReference>
<dbReference type="HAMAP" id="MF_00294">
    <property type="entry name" value="Ribosomal_bL33"/>
    <property type="match status" value="1"/>
</dbReference>
<dbReference type="InterPro" id="IPR001705">
    <property type="entry name" value="Ribosomal_bL33"/>
</dbReference>
<dbReference type="InterPro" id="IPR038584">
    <property type="entry name" value="Ribosomal_bL33_sf"/>
</dbReference>
<dbReference type="InterPro" id="IPR011332">
    <property type="entry name" value="Ribosomal_zn-bd"/>
</dbReference>
<dbReference type="NCBIfam" id="NF001764">
    <property type="entry name" value="PRK00504.1"/>
    <property type="match status" value="1"/>
</dbReference>
<dbReference type="NCBIfam" id="NF001860">
    <property type="entry name" value="PRK00595.1"/>
    <property type="match status" value="1"/>
</dbReference>
<dbReference type="NCBIfam" id="TIGR01023">
    <property type="entry name" value="rpmG_bact"/>
    <property type="match status" value="1"/>
</dbReference>
<dbReference type="PANTHER" id="PTHR43168">
    <property type="entry name" value="50S RIBOSOMAL PROTEIN L33, CHLOROPLASTIC"/>
    <property type="match status" value="1"/>
</dbReference>
<dbReference type="PANTHER" id="PTHR43168:SF2">
    <property type="entry name" value="LARGE RIBOSOMAL SUBUNIT PROTEIN BL33C"/>
    <property type="match status" value="1"/>
</dbReference>
<dbReference type="Pfam" id="PF00471">
    <property type="entry name" value="Ribosomal_L33"/>
    <property type="match status" value="1"/>
</dbReference>
<dbReference type="SUPFAM" id="SSF57829">
    <property type="entry name" value="Zn-binding ribosomal proteins"/>
    <property type="match status" value="1"/>
</dbReference>
<reference key="1">
    <citation type="journal article" date="2004" name="Proc. Natl. Acad. Sci. U.S.A.">
        <title>Genomic analysis of Bacteroides fragilis reveals extensive DNA inversions regulating cell surface adaptation.</title>
        <authorList>
            <person name="Kuwahara T."/>
            <person name="Yamashita A."/>
            <person name="Hirakawa H."/>
            <person name="Nakayama H."/>
            <person name="Toh H."/>
            <person name="Okada N."/>
            <person name="Kuhara S."/>
            <person name="Hattori M."/>
            <person name="Hayashi T."/>
            <person name="Ohnishi Y."/>
        </authorList>
    </citation>
    <scope>NUCLEOTIDE SEQUENCE [LARGE SCALE GENOMIC DNA]</scope>
    <source>
        <strain>YCH46</strain>
    </source>
</reference>
<accession>Q64TK2</accession>